<protein>
    <recommendedName>
        <fullName evidence="11">Histone-lysine N-methyltransferase ATXR3</fullName>
        <ecNumber evidence="5">2.1.1.354</ecNumber>
    </recommendedName>
    <alternativeName>
        <fullName evidence="8 9 10">Protein SET DOMAIN GROUP 2</fullName>
    </alternativeName>
    <alternativeName>
        <fullName evidence="8">Trithorax-related protein 3</fullName>
        <shortName evidence="8">TRX-related protein 3</shortName>
    </alternativeName>
</protein>
<reference key="1">
    <citation type="journal article" date="1998" name="Nature">
        <title>Analysis of 1.9 Mb of contiguous sequence from chromosome 4 of Arabidopsis thaliana.</title>
        <authorList>
            <person name="Bevan M."/>
            <person name="Bancroft I."/>
            <person name="Bent E."/>
            <person name="Love K."/>
            <person name="Goodman H.M."/>
            <person name="Dean C."/>
            <person name="Bergkamp R."/>
            <person name="Dirkse W."/>
            <person name="van Staveren M."/>
            <person name="Stiekema W."/>
            <person name="Drost L."/>
            <person name="Ridley P."/>
            <person name="Hudson S.-A."/>
            <person name="Patel K."/>
            <person name="Murphy G."/>
            <person name="Piffanelli P."/>
            <person name="Wedler H."/>
            <person name="Wedler E."/>
            <person name="Wambutt R."/>
            <person name="Weitzenegger T."/>
            <person name="Pohl T."/>
            <person name="Terryn N."/>
            <person name="Gielen J."/>
            <person name="Villarroel R."/>
            <person name="De Clercq R."/>
            <person name="van Montagu M."/>
            <person name="Lecharny A."/>
            <person name="Aubourg S."/>
            <person name="Gy I."/>
            <person name="Kreis M."/>
            <person name="Lao N."/>
            <person name="Kavanagh T."/>
            <person name="Hempel S."/>
            <person name="Kotter P."/>
            <person name="Entian K.-D."/>
            <person name="Rieger M."/>
            <person name="Schaefer M."/>
            <person name="Funk B."/>
            <person name="Mueller-Auer S."/>
            <person name="Silvey M."/>
            <person name="James R."/>
            <person name="Monfort A."/>
            <person name="Pons A."/>
            <person name="Puigdomenech P."/>
            <person name="Douka A."/>
            <person name="Voukelatou E."/>
            <person name="Milioni D."/>
            <person name="Hatzopoulos P."/>
            <person name="Piravandi E."/>
            <person name="Obermaier B."/>
            <person name="Hilbert H."/>
            <person name="Duesterhoeft A."/>
            <person name="Moores T."/>
            <person name="Jones J.D.G."/>
            <person name="Eneva T."/>
            <person name="Palme K."/>
            <person name="Benes V."/>
            <person name="Rechmann S."/>
            <person name="Ansorge W."/>
            <person name="Cooke R."/>
            <person name="Berger C."/>
            <person name="Delseny M."/>
            <person name="Voet M."/>
            <person name="Volckaert G."/>
            <person name="Mewes H.-W."/>
            <person name="Klosterman S."/>
            <person name="Schueller C."/>
            <person name="Chalwatzis N."/>
        </authorList>
    </citation>
    <scope>NUCLEOTIDE SEQUENCE [LARGE SCALE GENOMIC DNA]</scope>
    <source>
        <strain>cv. Columbia</strain>
    </source>
</reference>
<reference key="2">
    <citation type="journal article" date="1999" name="Nature">
        <title>Sequence and analysis of chromosome 4 of the plant Arabidopsis thaliana.</title>
        <authorList>
            <person name="Mayer K.F.X."/>
            <person name="Schueller C."/>
            <person name="Wambutt R."/>
            <person name="Murphy G."/>
            <person name="Volckaert G."/>
            <person name="Pohl T."/>
            <person name="Duesterhoeft A."/>
            <person name="Stiekema W."/>
            <person name="Entian K.-D."/>
            <person name="Terryn N."/>
            <person name="Harris B."/>
            <person name="Ansorge W."/>
            <person name="Brandt P."/>
            <person name="Grivell L.A."/>
            <person name="Rieger M."/>
            <person name="Weichselgartner M."/>
            <person name="de Simone V."/>
            <person name="Obermaier B."/>
            <person name="Mache R."/>
            <person name="Mueller M."/>
            <person name="Kreis M."/>
            <person name="Delseny M."/>
            <person name="Puigdomenech P."/>
            <person name="Watson M."/>
            <person name="Schmidtheini T."/>
            <person name="Reichert B."/>
            <person name="Portetelle D."/>
            <person name="Perez-Alonso M."/>
            <person name="Boutry M."/>
            <person name="Bancroft I."/>
            <person name="Vos P."/>
            <person name="Hoheisel J."/>
            <person name="Zimmermann W."/>
            <person name="Wedler H."/>
            <person name="Ridley P."/>
            <person name="Langham S.-A."/>
            <person name="McCullagh B."/>
            <person name="Bilham L."/>
            <person name="Robben J."/>
            <person name="van der Schueren J."/>
            <person name="Grymonprez B."/>
            <person name="Chuang Y.-J."/>
            <person name="Vandenbussche F."/>
            <person name="Braeken M."/>
            <person name="Weltjens I."/>
            <person name="Voet M."/>
            <person name="Bastiaens I."/>
            <person name="Aert R."/>
            <person name="Defoor E."/>
            <person name="Weitzenegger T."/>
            <person name="Bothe G."/>
            <person name="Ramsperger U."/>
            <person name="Hilbert H."/>
            <person name="Braun M."/>
            <person name="Holzer E."/>
            <person name="Brandt A."/>
            <person name="Peters S."/>
            <person name="van Staveren M."/>
            <person name="Dirkse W."/>
            <person name="Mooijman P."/>
            <person name="Klein Lankhorst R."/>
            <person name="Rose M."/>
            <person name="Hauf J."/>
            <person name="Koetter P."/>
            <person name="Berneiser S."/>
            <person name="Hempel S."/>
            <person name="Feldpausch M."/>
            <person name="Lamberth S."/>
            <person name="Van den Daele H."/>
            <person name="De Keyser A."/>
            <person name="Buysshaert C."/>
            <person name="Gielen J."/>
            <person name="Villarroel R."/>
            <person name="De Clercq R."/>
            <person name="van Montagu M."/>
            <person name="Rogers J."/>
            <person name="Cronin A."/>
            <person name="Quail M.A."/>
            <person name="Bray-Allen S."/>
            <person name="Clark L."/>
            <person name="Doggett J."/>
            <person name="Hall S."/>
            <person name="Kay M."/>
            <person name="Lennard N."/>
            <person name="McLay K."/>
            <person name="Mayes R."/>
            <person name="Pettett A."/>
            <person name="Rajandream M.A."/>
            <person name="Lyne M."/>
            <person name="Benes V."/>
            <person name="Rechmann S."/>
            <person name="Borkova D."/>
            <person name="Bloecker H."/>
            <person name="Scharfe M."/>
            <person name="Grimm M."/>
            <person name="Loehnert T.-H."/>
            <person name="Dose S."/>
            <person name="de Haan M."/>
            <person name="Maarse A.C."/>
            <person name="Schaefer M."/>
            <person name="Mueller-Auer S."/>
            <person name="Gabel C."/>
            <person name="Fuchs M."/>
            <person name="Fartmann B."/>
            <person name="Granderath K."/>
            <person name="Dauner D."/>
            <person name="Herzl A."/>
            <person name="Neumann S."/>
            <person name="Argiriou A."/>
            <person name="Vitale D."/>
            <person name="Liguori R."/>
            <person name="Piravandi E."/>
            <person name="Massenet O."/>
            <person name="Quigley F."/>
            <person name="Clabauld G."/>
            <person name="Muendlein A."/>
            <person name="Felber R."/>
            <person name="Schnabl S."/>
            <person name="Hiller R."/>
            <person name="Schmidt W."/>
            <person name="Lecharny A."/>
            <person name="Aubourg S."/>
            <person name="Chefdor F."/>
            <person name="Cooke R."/>
            <person name="Berger C."/>
            <person name="Monfort A."/>
            <person name="Casacuberta E."/>
            <person name="Gibbons T."/>
            <person name="Weber N."/>
            <person name="Vandenbol M."/>
            <person name="Bargues M."/>
            <person name="Terol J."/>
            <person name="Torres A."/>
            <person name="Perez-Perez A."/>
            <person name="Purnelle B."/>
            <person name="Bent E."/>
            <person name="Johnson S."/>
            <person name="Tacon D."/>
            <person name="Jesse T."/>
            <person name="Heijnen L."/>
            <person name="Schwarz S."/>
            <person name="Scholler P."/>
            <person name="Heber S."/>
            <person name="Francs P."/>
            <person name="Bielke C."/>
            <person name="Frishman D."/>
            <person name="Haase D."/>
            <person name="Lemcke K."/>
            <person name="Mewes H.-W."/>
            <person name="Stocker S."/>
            <person name="Zaccaria P."/>
            <person name="Bevan M."/>
            <person name="Wilson R.K."/>
            <person name="de la Bastide M."/>
            <person name="Habermann K."/>
            <person name="Parnell L."/>
            <person name="Dedhia N."/>
            <person name="Gnoj L."/>
            <person name="Schutz K."/>
            <person name="Huang E."/>
            <person name="Spiegel L."/>
            <person name="Sekhon M."/>
            <person name="Murray J."/>
            <person name="Sheet P."/>
            <person name="Cordes M."/>
            <person name="Abu-Threideh J."/>
            <person name="Stoneking T."/>
            <person name="Kalicki J."/>
            <person name="Graves T."/>
            <person name="Harmon G."/>
            <person name="Edwards J."/>
            <person name="Latreille P."/>
            <person name="Courtney L."/>
            <person name="Cloud J."/>
            <person name="Abbott A."/>
            <person name="Scott K."/>
            <person name="Johnson D."/>
            <person name="Minx P."/>
            <person name="Bentley D."/>
            <person name="Fulton B."/>
            <person name="Miller N."/>
            <person name="Greco T."/>
            <person name="Kemp K."/>
            <person name="Kramer J."/>
            <person name="Fulton L."/>
            <person name="Mardis E."/>
            <person name="Dante M."/>
            <person name="Pepin K."/>
            <person name="Hillier L.W."/>
            <person name="Nelson J."/>
            <person name="Spieth J."/>
            <person name="Ryan E."/>
            <person name="Andrews S."/>
            <person name="Geisel C."/>
            <person name="Layman D."/>
            <person name="Du H."/>
            <person name="Ali J."/>
            <person name="Berghoff A."/>
            <person name="Jones K."/>
            <person name="Drone K."/>
            <person name="Cotton M."/>
            <person name="Joshu C."/>
            <person name="Antonoiu B."/>
            <person name="Zidanic M."/>
            <person name="Strong C."/>
            <person name="Sun H."/>
            <person name="Lamar B."/>
            <person name="Yordan C."/>
            <person name="Ma P."/>
            <person name="Zhong J."/>
            <person name="Preston R."/>
            <person name="Vil D."/>
            <person name="Shekher M."/>
            <person name="Matero A."/>
            <person name="Shah R."/>
            <person name="Swaby I.K."/>
            <person name="O'Shaughnessy A."/>
            <person name="Rodriguez M."/>
            <person name="Hoffman J."/>
            <person name="Till S."/>
            <person name="Granat S."/>
            <person name="Shohdy N."/>
            <person name="Hasegawa A."/>
            <person name="Hameed A."/>
            <person name="Lodhi M."/>
            <person name="Johnson A."/>
            <person name="Chen E."/>
            <person name="Marra M.A."/>
            <person name="Martienssen R."/>
            <person name="McCombie W.R."/>
        </authorList>
    </citation>
    <scope>NUCLEOTIDE SEQUENCE [LARGE SCALE GENOMIC DNA]</scope>
    <source>
        <strain>cv. Columbia</strain>
    </source>
</reference>
<reference key="3">
    <citation type="journal article" date="2017" name="Plant J.">
        <title>Araport11: a complete reannotation of the Arabidopsis thaliana reference genome.</title>
        <authorList>
            <person name="Cheng C.Y."/>
            <person name="Krishnakumar V."/>
            <person name="Chan A.P."/>
            <person name="Thibaud-Nissen F."/>
            <person name="Schobel S."/>
            <person name="Town C.D."/>
        </authorList>
    </citation>
    <scope>GENOME REANNOTATION</scope>
    <source>
        <strain>cv. Columbia</strain>
    </source>
</reference>
<reference key="4">
    <citation type="submission" date="2006-07" db="EMBL/GenBank/DDBJ databases">
        <title>Large-scale analysis of RIKEN Arabidopsis full-length (RAFL) cDNAs.</title>
        <authorList>
            <person name="Totoki Y."/>
            <person name="Seki M."/>
            <person name="Ishida J."/>
            <person name="Nakajima M."/>
            <person name="Enju A."/>
            <person name="Kamiya A."/>
            <person name="Narusaka M."/>
            <person name="Shin-i T."/>
            <person name="Nakagawa M."/>
            <person name="Sakamoto N."/>
            <person name="Oishi K."/>
            <person name="Kohara Y."/>
            <person name="Kobayashi M."/>
            <person name="Toyoda A."/>
            <person name="Sakaki Y."/>
            <person name="Sakurai T."/>
            <person name="Iida K."/>
            <person name="Akiyama K."/>
            <person name="Satou M."/>
            <person name="Toyoda T."/>
            <person name="Konagaya A."/>
            <person name="Carninci P."/>
            <person name="Kawai J."/>
            <person name="Hayashizaki Y."/>
            <person name="Shinozaki K."/>
        </authorList>
    </citation>
    <scope>NUCLEOTIDE SEQUENCE [LARGE SCALE MRNA] OF 1-517</scope>
    <source>
        <strain>cv. Columbia</strain>
    </source>
</reference>
<reference key="5">
    <citation type="journal article" date="2001" name="Nucleic Acids Res.">
        <title>The Arabidopsis thaliana genome contains at least 29 active genes encoding SET domain proteins that can be assigned to four evolutionarily conserved classes.</title>
        <authorList>
            <person name="Baumbusch L.O."/>
            <person name="Thorstensen T."/>
            <person name="Krauss V."/>
            <person name="Fischer A."/>
            <person name="Naumann K."/>
            <person name="Assalkhou R."/>
            <person name="Schulz I."/>
            <person name="Reuter G."/>
            <person name="Aalen R.B."/>
        </authorList>
    </citation>
    <scope>NOMENCLATURE</scope>
</reference>
<reference key="6">
    <citation type="journal article" date="2010" name="Plant Cell">
        <title>Arabidopsis SET DOMAIN GROUP2 is required for H3K4 trimethylation and is crucial for both sporophyte and gametophyte development.</title>
        <authorList>
            <person name="Berr A."/>
            <person name="McCallum E.J."/>
            <person name="Menard R."/>
            <person name="Meyer D."/>
            <person name="Fuchs J."/>
            <person name="Dong A."/>
            <person name="Shen W.H."/>
        </authorList>
    </citation>
    <scope>FUNCTION</scope>
    <scope>DISRUPTION PHENOTYPE</scope>
</reference>
<reference key="7">
    <citation type="journal article" date="2010" name="Proc. Natl. Acad. Sci. U.S.A.">
        <title>SET DOMAIN GROUP2 is the major histone H3 lysine 4 trimethyltransferase in Arabidopsis.</title>
        <authorList>
            <person name="Guo L."/>
            <person name="Yu Y."/>
            <person name="Law J.A."/>
            <person name="Zhang X."/>
        </authorList>
    </citation>
    <scope>FUNCTION</scope>
    <scope>TISSUE SPECIFICITY</scope>
    <scope>DISRUPTION PHENOTYPE</scope>
</reference>
<reference key="8">
    <citation type="journal article" date="2019" name="Genome Biol.">
        <title>Diurnal regulation of SDG2 and JMJ14 by circadian clock oscillators orchestrates histone modification rhythms in Arabidopsis.</title>
        <authorList>
            <person name="Song Q."/>
            <person name="Huang T.-Y."/>
            <person name="Yu H.H."/>
            <person name="Ando A."/>
            <person name="Mas P."/>
            <person name="Ha M."/>
            <person name="Chen Z.J."/>
        </authorList>
    </citation>
    <scope>FUNCTION</scope>
    <scope>DISRUPTION PHENOTYPE</scope>
    <scope>INDUCTION</scope>
    <source>
        <strain>cv. Columbia</strain>
        <strain>cv. Wassilewskija</strain>
    </source>
</reference>
<name>ATXR3_ARATH</name>
<comment type="function">
    <text evidence="5 6 7">Histone methyltransferase specifically required for trimethylation of 'Lys-4' of histone H3 (H3K4me3) and is crucial for both sporophyte and gametophyte development (PubMed:20937886, PubMed:21037105). Function as a diurnal 'writer' to counteract the nocturne 'eraser' demethylase activity of JMJ14 thus orchestrating the circadian rhythm of histone modifications (e.g. H3K4me3) and modulating the rhythmic expression of diurnal target genes; this mechanism relies also on the circadian clock oscillators CCA1 and LHY (PubMed:31429787).</text>
</comment>
<comment type="catalytic activity">
    <reaction evidence="5">
        <text>L-lysyl(4)-[histone H3] + 3 S-adenosyl-L-methionine = N(6),N(6),N(6)-trimethyl-L-lysyl(4)-[histone H3] + 3 S-adenosyl-L-homocysteine + 3 H(+)</text>
        <dbReference type="Rhea" id="RHEA:60260"/>
        <dbReference type="Rhea" id="RHEA-COMP:15537"/>
        <dbReference type="Rhea" id="RHEA-COMP:15547"/>
        <dbReference type="ChEBI" id="CHEBI:15378"/>
        <dbReference type="ChEBI" id="CHEBI:29969"/>
        <dbReference type="ChEBI" id="CHEBI:57856"/>
        <dbReference type="ChEBI" id="CHEBI:59789"/>
        <dbReference type="ChEBI" id="CHEBI:61961"/>
        <dbReference type="EC" id="2.1.1.354"/>
    </reaction>
</comment>
<comment type="subcellular location">
    <subcellularLocation>
        <location evidence="3">Nucleus</location>
    </subcellularLocation>
</comment>
<comment type="tissue specificity">
    <text evidence="5">Expressed in roots, leaves, stems and inflorescences.</text>
</comment>
<comment type="induction">
    <text evidence="7">Circadian-regulation with peak levels occurring in the morning under diurnal but not constant light conditions in a CCA1- and LHY-dependent manner.</text>
</comment>
<comment type="disruption phenotype">
    <text evidence="5 6 7">Pleiotropic effects on plant growth and development, including dwarf size, aberrant root development and sterile flowers (PubMed:20937886, PubMed:21037105). Decreased levels of CCA1 and LHY circadian oscillators transcription factors as well as of other clock genes such as TOC1, PRR5, PRR7, PRR9, GI, ELF3, ELF4, and LUX associated with reduced H3K4me3 levels near their promoters (PubMed:31429787).</text>
</comment>
<comment type="similarity">
    <text evidence="2">Belongs to the class V-like SAM-binding methyltransferase superfamily. Histone-lysine methyltransferase family. TRX/MLL subfamily.</text>
</comment>
<comment type="sequence caution" evidence="11">
    <conflict type="erroneous gene model prediction">
        <sequence resource="EMBL-CDS" id="CAB10297"/>
    </conflict>
</comment>
<comment type="sequence caution" evidence="11">
    <conflict type="erroneous gene model prediction">
        <sequence resource="EMBL-CDS" id="CAB78560"/>
    </conflict>
</comment>
<sequence length="2335" mass="267060">MSDGGVACMPLLNIMEKLPIVEKTTLCGGNESKTAATTENGHTSIATKVPESQPANKPSASSQPVKKKRIVKVIRKVVKRRPKQPQKQADEQLKDQPPSQVVQLPAESQLQIKEQDKKSEFKGGTSGVKEVENGGDSGFKDEVEEGELGTLKLHEDLENGEISPVKSLQKSEIEKGEIVGESWKKDEPTKGEFSHLKYHKGYVERRDFSADKNWKGGKEEREFRSWRDPSDEIEKGEFIPDRWQKMDTGKDDHSYIRSRRNGVDREKTWKYEYEYERTPPGGRFVNEDIYHQREFRSGLDRTTRISSKIVIEENLHKNEYNNSSNFVKEYSSTGNRLKRHGAEPDSIERKHSYADYGDYGSSKCRKLSDDCSRSLHSDHYSQHSAERLYRDSYPSKNSSLEKYPRKHQDASFPAKAFSDKHGHSPSRSDWSPHDRSRYHENRDRSPYARERSPYIFEKSSHARKRSPRDRRHHDYRRSPSYSEWSPHDRSRPSDRRDYIPNFMEDTQSDRNRRNGHREISRKSGVRERRDCQTGTELEIKHKYKESNGKESTSSSKELQGKNILYNNSLLVEKNSVCDSSKIPVPCATGKEPVQVGEAPTEELPSMEVDMDICDTPPHEPMASDSSLGKWFYLDYYGTEHGPARLSDLKALMEQGILFSDHMIKHSDNNRWLVNPPEAPGNLLEDIADTTEAVCIEQGAGDSLPELVSVRTLPDGKEIFVENREDFQIDMRVENLLDGRTITPGREFETLGEALKVNVEFEETRRCVTSEGVVGMFRPMKRAIEEFKSDDAYGSESDEIGSWFSGRWSCKGGDWIRQDEASQDRYYKKKIVLNDGFPLCLMQKSGHEDPRWHHKDDLYYPLSSSRLELPLWAFSVVDERNQTRGVKASLLSVVRLNSLVVNDQVPPIPDPRAKVRSKERCPSRPARPSPASSDSKRESVESHSQSTASTGQDSQGLWKTDTSVNTPRDRLCTVDDLQLHIGDWFYTDGAGQEQGPLSFSELQKLVEKGFIKSHSSVFRKSDKIWVPVTSITKSPETIAMLRGKTPALPSACQGLVVSETQDFKYSEMDTSLNSFHGVHPQFLGYFRGKLHQLVMKTFKSRDFSAAINDVVDSWIHARQPKKESEKYMYQSSELNSCYTKRARLMAGESGEDSEMEDTQMFQKDELTFEDLCGDLTFNIEGNRSAGTVGIYWGLLDGHALARVFHMLRYDVKSLAFASMTCRHWKATINSYKDISRQVDLSSLGPSCTDSRLRSIMNTYNKEKIDSIILVGCTNVTASMLEEILRLHPRISSVDITGCSQFGDLTVNYKNVSWLRCQNTRSGELHSRIRSLKQTTDVAKSKGLGGDTDDFGNLKDYFDRVEKRDSANQLFRRSLYKRSKLYDARRSSAILSRDARIRRWAIKKSEHGYKRVEEFLASSLRGIMKQNTFDFFALKVSQIEEKMKNGYYVSHGLRSVKEDISRMCREAIKDELMKSWQDGSGLSSATKYNKKLSKTVAEKKYMSRTSDTFGVNGASDYGEYASDREIKRRLSKLNRKSFSSESDTSSELSDNGKSDNYSSASASESESDIRSEGRSQDLRIEKYFTADDSFDSVTEEREWGARMTKASLVPPVTRKYEVIEKYAIVADEEEVQRKMRVSLPEDYGEKLNAQRNGIEELDMELPEVKEYKPRKLLGDEVLEQEVYGIDPYTHNLLLDSMPGELDWSLQDKHSFIEDVVLRTLNRQVRLFTGSGSTPMVFPLRPVIEELKESAREECDIRTMKMCQGVLKEIESRSDDKYVSYRKGLGVVCNKEGGFGEEDFVVEFLGEVYPVWKWFEKQDGIRSLQENKTDPAPEFYNIYLERPKGDADGYDLVVVDAMHMANYASRICHSCRPNCEAKVTAVDGHYQIGIYSVRAIEYGEEITFDYNSVTESKEEYEASVCLCGSQVCRGSYLNLTGEGAFQKVLKDWHGLLERHRLMLEACVLNSVSEEDYLELGRAGLGSCLLGGLPDWMIAYSARLVRFINFERTKLPEEILKHNLEEKRKYFSDIHLDVEKSDAEVQAEGVYNQRLQNLAVTLDKVRYVMRHVFGDPKNAPPPLERLTPEETVSFVWNGDGSLVDELLQSLSPHLEEGPLNELRSKIHGHDPSGSADVLKELQRSLLWLRDEIRDLPCTYKCRNDAAADLIHIYAYTKCFFKVREYQSFISSPVHISPLDLGAKYADKLGESIKEYRKTYGENYCLGQLIYWYNQTNTDPDLTLVKATRGCLSLPDVASFYAKAQKPSKHRVYGPKTVKTMVSQMSKQPQRPWPKDKIWTFKSTPRVFGSPMFDAVLNNSSSLDRELLQWLRNRRHVFQATWDS</sequence>
<organism>
    <name type="scientific">Arabidopsis thaliana</name>
    <name type="common">Mouse-ear cress</name>
    <dbReference type="NCBI Taxonomy" id="3702"/>
    <lineage>
        <taxon>Eukaryota</taxon>
        <taxon>Viridiplantae</taxon>
        <taxon>Streptophyta</taxon>
        <taxon>Embryophyta</taxon>
        <taxon>Tracheophyta</taxon>
        <taxon>Spermatophyta</taxon>
        <taxon>Magnoliopsida</taxon>
        <taxon>eudicotyledons</taxon>
        <taxon>Gunneridae</taxon>
        <taxon>Pentapetalae</taxon>
        <taxon>rosids</taxon>
        <taxon>malvids</taxon>
        <taxon>Brassicales</taxon>
        <taxon>Brassicaceae</taxon>
        <taxon>Camelineae</taxon>
        <taxon>Arabidopsis</taxon>
    </lineage>
</organism>
<evidence type="ECO:0000255" key="1">
    <source>
        <dbReference type="PROSITE-ProRule" id="PRU00155"/>
    </source>
</evidence>
<evidence type="ECO:0000255" key="2">
    <source>
        <dbReference type="PROSITE-ProRule" id="PRU00190"/>
    </source>
</evidence>
<evidence type="ECO:0000255" key="3">
    <source>
        <dbReference type="PROSITE-ProRule" id="PRU00768"/>
    </source>
</evidence>
<evidence type="ECO:0000256" key="4">
    <source>
        <dbReference type="SAM" id="MobiDB-lite"/>
    </source>
</evidence>
<evidence type="ECO:0000269" key="5">
    <source>
    </source>
</evidence>
<evidence type="ECO:0000269" key="6">
    <source>
    </source>
</evidence>
<evidence type="ECO:0000269" key="7">
    <source>
    </source>
</evidence>
<evidence type="ECO:0000303" key="8">
    <source>
    </source>
</evidence>
<evidence type="ECO:0000303" key="9">
    <source>
    </source>
</evidence>
<evidence type="ECO:0000303" key="10">
    <source>
    </source>
</evidence>
<evidence type="ECO:0000305" key="11"/>
<evidence type="ECO:0000312" key="12">
    <source>
        <dbReference type="Araport" id="AT4G15180"/>
    </source>
</evidence>
<evidence type="ECO:0000312" key="13">
    <source>
        <dbReference type="EMBL" id="CAB10297.1"/>
    </source>
</evidence>
<evidence type="ECO:0000312" key="14">
    <source>
        <dbReference type="EMBL" id="CAB78560.1"/>
    </source>
</evidence>
<proteinExistence type="evidence at transcript level"/>
<keyword id="KW-0156">Chromatin regulator</keyword>
<keyword id="KW-0479">Metal-binding</keyword>
<keyword id="KW-0489">Methyltransferase</keyword>
<keyword id="KW-0539">Nucleus</keyword>
<keyword id="KW-1185">Reference proteome</keyword>
<keyword id="KW-0949">S-adenosyl-L-methionine</keyword>
<keyword id="KW-0808">Transferase</keyword>
<keyword id="KW-0862">Zinc</keyword>
<gene>
    <name evidence="8" type="primary">ATXR3</name>
    <name evidence="9 10" type="synonym">SDG2</name>
    <name evidence="8" type="synonym">SET2</name>
    <name evidence="12" type="ordered locus">At4g15180</name>
    <name evidence="13" type="ORF">dl3635w</name>
    <name evidence="14" type="ORF">FCAALL.214</name>
</gene>
<dbReference type="EC" id="2.1.1.354" evidence="5"/>
<dbReference type="EMBL" id="Z97338">
    <property type="protein sequence ID" value="CAB10297.1"/>
    <property type="status" value="ALT_SEQ"/>
    <property type="molecule type" value="Genomic_DNA"/>
</dbReference>
<dbReference type="EMBL" id="AL161540">
    <property type="protein sequence ID" value="CAB78560.1"/>
    <property type="status" value="ALT_SEQ"/>
    <property type="molecule type" value="Genomic_DNA"/>
</dbReference>
<dbReference type="EMBL" id="CP002687">
    <property type="protein sequence ID" value="AEE83565.1"/>
    <property type="molecule type" value="Genomic_DNA"/>
</dbReference>
<dbReference type="EMBL" id="AK226725">
    <property type="protein sequence ID" value="BAE98829.1"/>
    <property type="molecule type" value="mRNA"/>
</dbReference>
<dbReference type="PIR" id="G71415">
    <property type="entry name" value="G71415"/>
</dbReference>
<dbReference type="RefSeq" id="NP_193253.4">
    <property type="nucleotide sequence ID" value="NM_117606.5"/>
</dbReference>
<dbReference type="FunCoup" id="O23372">
    <property type="interactions" value="1562"/>
</dbReference>
<dbReference type="STRING" id="3702.O23372"/>
<dbReference type="GlyGen" id="O23372">
    <property type="glycosylation" value="2 sites"/>
</dbReference>
<dbReference type="iPTMnet" id="O23372"/>
<dbReference type="PaxDb" id="3702-AT4G15180.1"/>
<dbReference type="ProteomicsDB" id="241103"/>
<dbReference type="EnsemblPlants" id="AT4G15180.1">
    <property type="protein sequence ID" value="AT4G15180.1"/>
    <property type="gene ID" value="AT4G15180"/>
</dbReference>
<dbReference type="GeneID" id="827183"/>
<dbReference type="Gramene" id="AT4G15180.1">
    <property type="protein sequence ID" value="AT4G15180.1"/>
    <property type="gene ID" value="AT4G15180"/>
</dbReference>
<dbReference type="KEGG" id="ath:AT4G15180"/>
<dbReference type="Araport" id="AT4G15180"/>
<dbReference type="TAIR" id="AT4G15180">
    <property type="gene designation" value="SDG2"/>
</dbReference>
<dbReference type="eggNOG" id="KOG1080">
    <property type="taxonomic scope" value="Eukaryota"/>
</dbReference>
<dbReference type="HOGENOM" id="CLU_000704_0_0_1"/>
<dbReference type="InParanoid" id="O23372"/>
<dbReference type="OMA" id="PHISYVH"/>
<dbReference type="PhylomeDB" id="O23372"/>
<dbReference type="PRO" id="PR:O23372"/>
<dbReference type="Proteomes" id="UP000006548">
    <property type="component" value="Chromosome 4"/>
</dbReference>
<dbReference type="ExpressionAtlas" id="O23372">
    <property type="expression patterns" value="baseline and differential"/>
</dbReference>
<dbReference type="GO" id="GO:0005634">
    <property type="term" value="C:nucleus"/>
    <property type="evidence" value="ECO:0007669"/>
    <property type="project" value="UniProtKB-SubCell"/>
</dbReference>
<dbReference type="GO" id="GO:0042800">
    <property type="term" value="F:histone H3K4 methyltransferase activity"/>
    <property type="evidence" value="ECO:0000314"/>
    <property type="project" value="TAIR"/>
</dbReference>
<dbReference type="GO" id="GO:0140999">
    <property type="term" value="F:histone H3K4 trimethyltransferase activity"/>
    <property type="evidence" value="ECO:0007669"/>
    <property type="project" value="UniProtKB-EC"/>
</dbReference>
<dbReference type="GO" id="GO:0046872">
    <property type="term" value="F:metal ion binding"/>
    <property type="evidence" value="ECO:0007669"/>
    <property type="project" value="UniProtKB-KW"/>
</dbReference>
<dbReference type="GO" id="GO:0048440">
    <property type="term" value="P:carpel development"/>
    <property type="evidence" value="ECO:0000315"/>
    <property type="project" value="TAIR"/>
</dbReference>
<dbReference type="GO" id="GO:0007623">
    <property type="term" value="P:circadian rhythm"/>
    <property type="evidence" value="ECO:0000315"/>
    <property type="project" value="UniProtKB"/>
</dbReference>
<dbReference type="GO" id="GO:0040029">
    <property type="term" value="P:epigenetic regulation of gene expression"/>
    <property type="evidence" value="ECO:0000315"/>
    <property type="project" value="UniProtKB"/>
</dbReference>
<dbReference type="GO" id="GO:0032259">
    <property type="term" value="P:methylation"/>
    <property type="evidence" value="ECO:0007669"/>
    <property type="project" value="UniProtKB-KW"/>
</dbReference>
<dbReference type="GO" id="GO:0009791">
    <property type="term" value="P:post-embryonic development"/>
    <property type="evidence" value="ECO:0000315"/>
    <property type="project" value="TAIR"/>
</dbReference>
<dbReference type="GO" id="GO:0048443">
    <property type="term" value="P:stamen development"/>
    <property type="evidence" value="ECO:0000315"/>
    <property type="project" value="TAIR"/>
</dbReference>
<dbReference type="GO" id="GO:0010228">
    <property type="term" value="P:vegetative to reproductive phase transition of meristem"/>
    <property type="evidence" value="ECO:0000315"/>
    <property type="project" value="TAIR"/>
</dbReference>
<dbReference type="CDD" id="cd10531">
    <property type="entry name" value="SET_SETD2-like"/>
    <property type="match status" value="1"/>
</dbReference>
<dbReference type="Gene3D" id="2.170.270.10">
    <property type="entry name" value="SET domain"/>
    <property type="match status" value="1"/>
</dbReference>
<dbReference type="InterPro" id="IPR035445">
    <property type="entry name" value="GYF-like_dom_sf"/>
</dbReference>
<dbReference type="InterPro" id="IPR025640">
    <property type="entry name" value="GYF_2"/>
</dbReference>
<dbReference type="InterPro" id="IPR045606">
    <property type="entry name" value="SDG2_C"/>
</dbReference>
<dbReference type="InterPro" id="IPR001214">
    <property type="entry name" value="SET_dom"/>
</dbReference>
<dbReference type="InterPro" id="IPR046341">
    <property type="entry name" value="SET_dom_sf"/>
</dbReference>
<dbReference type="PANTHER" id="PTHR46655">
    <property type="entry name" value="HISTONE-LYSINE N-METHYLTRANSFERASE ATXR3"/>
    <property type="match status" value="1"/>
</dbReference>
<dbReference type="PANTHER" id="PTHR46655:SF1">
    <property type="entry name" value="HISTONE-LYSINE N-METHYLTRANSFERASE ATXR3"/>
    <property type="match status" value="1"/>
</dbReference>
<dbReference type="Pfam" id="PF14237">
    <property type="entry name" value="GYF_2"/>
    <property type="match status" value="1"/>
</dbReference>
<dbReference type="Pfam" id="PF19633">
    <property type="entry name" value="SDG2_C"/>
    <property type="match status" value="1"/>
</dbReference>
<dbReference type="Pfam" id="PF00856">
    <property type="entry name" value="SET"/>
    <property type="match status" value="1"/>
</dbReference>
<dbReference type="SMART" id="SM00317">
    <property type="entry name" value="SET"/>
    <property type="match status" value="1"/>
</dbReference>
<dbReference type="SUPFAM" id="SSF55277">
    <property type="entry name" value="GYF domain"/>
    <property type="match status" value="1"/>
</dbReference>
<dbReference type="SUPFAM" id="SSF82199">
    <property type="entry name" value="SET domain"/>
    <property type="match status" value="1"/>
</dbReference>
<dbReference type="PROSITE" id="PS50280">
    <property type="entry name" value="SET"/>
    <property type="match status" value="1"/>
</dbReference>
<accession>O23372</accession>
<accession>Q0WVL9</accession>
<feature type="chain" id="PRO_0000233360" description="Histone-lysine N-methyltransferase ATXR3">
    <location>
        <begin position="1"/>
        <end position="2335"/>
    </location>
</feature>
<feature type="domain" description="SET" evidence="2">
    <location>
        <begin position="1765"/>
        <end position="1904"/>
    </location>
</feature>
<feature type="domain" description="Post-SET" evidence="1">
    <location>
        <begin position="1914"/>
        <end position="1930"/>
    </location>
</feature>
<feature type="region of interest" description="Disordered" evidence="4">
    <location>
        <begin position="30"/>
        <end position="142"/>
    </location>
</feature>
<feature type="region of interest" description="Disordered" evidence="4">
    <location>
        <begin position="332"/>
        <end position="355"/>
    </location>
</feature>
<feature type="region of interest" description="Disordered" evidence="4">
    <location>
        <begin position="371"/>
        <end position="556"/>
    </location>
</feature>
<feature type="region of interest" description="Disordered" evidence="4">
    <location>
        <begin position="902"/>
        <end position="961"/>
    </location>
</feature>
<feature type="region of interest" description="Disordered" evidence="4">
    <location>
        <begin position="1532"/>
        <end position="1572"/>
    </location>
</feature>
<feature type="short sequence motif" description="Nuclear localization signal 1" evidence="3">
    <location>
        <begin position="67"/>
        <end position="74"/>
    </location>
</feature>
<feature type="short sequence motif" description="Nuclear localization signal 2" evidence="3">
    <location>
        <begin position="527"/>
        <end position="534"/>
    </location>
</feature>
<feature type="short sequence motif" description="Nuclear localization signal 3" evidence="3">
    <location>
        <begin position="1382"/>
        <end position="1389"/>
    </location>
</feature>
<feature type="compositionally biased region" description="Polar residues" evidence="4">
    <location>
        <begin position="31"/>
        <end position="46"/>
    </location>
</feature>
<feature type="compositionally biased region" description="Polar residues" evidence="4">
    <location>
        <begin position="53"/>
        <end position="62"/>
    </location>
</feature>
<feature type="compositionally biased region" description="Basic residues" evidence="4">
    <location>
        <begin position="65"/>
        <end position="84"/>
    </location>
</feature>
<feature type="compositionally biased region" description="Polar residues" evidence="4">
    <location>
        <begin position="97"/>
        <end position="112"/>
    </location>
</feature>
<feature type="compositionally biased region" description="Basic and acidic residues" evidence="4">
    <location>
        <begin position="340"/>
        <end position="353"/>
    </location>
</feature>
<feature type="compositionally biased region" description="Basic and acidic residues" evidence="4">
    <location>
        <begin position="371"/>
        <end position="390"/>
    </location>
</feature>
<feature type="compositionally biased region" description="Basic and acidic residues" evidence="4">
    <location>
        <begin position="430"/>
        <end position="452"/>
    </location>
</feature>
<feature type="compositionally biased region" description="Basic residues" evidence="4">
    <location>
        <begin position="461"/>
        <end position="475"/>
    </location>
</feature>
<feature type="compositionally biased region" description="Basic and acidic residues" evidence="4">
    <location>
        <begin position="485"/>
        <end position="498"/>
    </location>
</feature>
<feature type="compositionally biased region" description="Basic and acidic residues" evidence="4">
    <location>
        <begin position="507"/>
        <end position="548"/>
    </location>
</feature>
<feature type="compositionally biased region" description="Basic and acidic residues" evidence="4">
    <location>
        <begin position="910"/>
        <end position="921"/>
    </location>
</feature>
<feature type="compositionally biased region" description="Low complexity" evidence="4">
    <location>
        <begin position="922"/>
        <end position="932"/>
    </location>
</feature>
<feature type="compositionally biased region" description="Polar residues" evidence="4">
    <location>
        <begin position="941"/>
        <end position="961"/>
    </location>
</feature>
<feature type="compositionally biased region" description="Low complexity" evidence="4">
    <location>
        <begin position="1535"/>
        <end position="1547"/>
    </location>
</feature>
<feature type="binding site" evidence="2">
    <location>
        <position position="1868"/>
    </location>
    <ligand>
        <name>Zn(2+)</name>
        <dbReference type="ChEBI" id="CHEBI:29105"/>
    </ligand>
</feature>
<feature type="binding site" evidence="2">
    <location>
        <position position="1903"/>
    </location>
    <ligand>
        <name>S-adenosyl-L-methionine</name>
        <dbReference type="ChEBI" id="CHEBI:59789"/>
    </ligand>
</feature>
<feature type="binding site" evidence="1">
    <location>
        <position position="1918"/>
    </location>
    <ligand>
        <name>Zn(2+)</name>
        <dbReference type="ChEBI" id="CHEBI:29105"/>
    </ligand>
</feature>
<feature type="binding site" evidence="1">
    <location>
        <position position="1920"/>
    </location>
    <ligand>
        <name>Zn(2+)</name>
        <dbReference type="ChEBI" id="CHEBI:29105"/>
    </ligand>
</feature>
<feature type="binding site" evidence="1">
    <location>
        <position position="1925"/>
    </location>
    <ligand>
        <name>Zn(2+)</name>
        <dbReference type="ChEBI" id="CHEBI:29105"/>
    </ligand>
</feature>